<organism>
    <name type="scientific">Aromatoleum aromaticum (strain DSM 19018 / LMG 30748 / EbN1)</name>
    <name type="common">Azoarcus sp. (strain EbN1)</name>
    <dbReference type="NCBI Taxonomy" id="76114"/>
    <lineage>
        <taxon>Bacteria</taxon>
        <taxon>Pseudomonadati</taxon>
        <taxon>Pseudomonadota</taxon>
        <taxon>Betaproteobacteria</taxon>
        <taxon>Rhodocyclales</taxon>
        <taxon>Rhodocyclaceae</taxon>
        <taxon>Aromatoleum</taxon>
    </lineage>
</organism>
<accession>Q5NZG4</accession>
<keyword id="KW-0963">Cytoplasm</keyword>
<keyword id="KW-0441">Lipid A biosynthesis</keyword>
<keyword id="KW-0444">Lipid biosynthesis</keyword>
<keyword id="KW-0443">Lipid metabolism</keyword>
<keyword id="KW-0456">Lyase</keyword>
<keyword id="KW-1185">Reference proteome</keyword>
<feature type="chain" id="PRO_0000091633" description="3-hydroxyacyl-[acyl-carrier-protein] dehydratase FabZ">
    <location>
        <begin position="1"/>
        <end position="145"/>
    </location>
</feature>
<feature type="active site" evidence="1">
    <location>
        <position position="47"/>
    </location>
</feature>
<proteinExistence type="inferred from homology"/>
<comment type="function">
    <text evidence="1">Involved in unsaturated fatty acids biosynthesis. Catalyzes the dehydration of short chain beta-hydroxyacyl-ACPs and long chain saturated and unsaturated beta-hydroxyacyl-ACPs.</text>
</comment>
<comment type="catalytic activity">
    <reaction evidence="1">
        <text>a (3R)-hydroxyacyl-[ACP] = a (2E)-enoyl-[ACP] + H2O</text>
        <dbReference type="Rhea" id="RHEA:13097"/>
        <dbReference type="Rhea" id="RHEA-COMP:9925"/>
        <dbReference type="Rhea" id="RHEA-COMP:9945"/>
        <dbReference type="ChEBI" id="CHEBI:15377"/>
        <dbReference type="ChEBI" id="CHEBI:78784"/>
        <dbReference type="ChEBI" id="CHEBI:78827"/>
        <dbReference type="EC" id="4.2.1.59"/>
    </reaction>
</comment>
<comment type="subcellular location">
    <subcellularLocation>
        <location evidence="1">Cytoplasm</location>
    </subcellularLocation>
</comment>
<comment type="similarity">
    <text evidence="1">Belongs to the thioester dehydratase family. FabZ subfamily.</text>
</comment>
<sequence length="145" mass="16312">MDINEILQYLPHRYPFLLVDRVLEIEEGKRILALKNVTMNEPFFPGHFPHHPVMPGVLIVEAMAQAAALLSFKSMGVKPDENSVVYFAGIDNVRFKRPVVPGDQLLFDVVITQSKRNIYKYKGVARVDGELATEAELTCALKTLS</sequence>
<evidence type="ECO:0000255" key="1">
    <source>
        <dbReference type="HAMAP-Rule" id="MF_00406"/>
    </source>
</evidence>
<gene>
    <name evidence="1" type="primary">fabZ</name>
    <name type="ordered locus">AZOSEA34250</name>
    <name type="ORF">ebA5999</name>
</gene>
<reference key="1">
    <citation type="journal article" date="2005" name="Arch. Microbiol.">
        <title>The genome sequence of an anaerobic aromatic-degrading denitrifying bacterium, strain EbN1.</title>
        <authorList>
            <person name="Rabus R."/>
            <person name="Kube M."/>
            <person name="Heider J."/>
            <person name="Beck A."/>
            <person name="Heitmann K."/>
            <person name="Widdel F."/>
            <person name="Reinhardt R."/>
        </authorList>
    </citation>
    <scope>NUCLEOTIDE SEQUENCE [LARGE SCALE GENOMIC DNA]</scope>
    <source>
        <strain>DSM 19018 / LMG 30748 / EbN1</strain>
    </source>
</reference>
<dbReference type="EC" id="4.2.1.59" evidence="1"/>
<dbReference type="EMBL" id="CR555306">
    <property type="protein sequence ID" value="CAI09550.1"/>
    <property type="molecule type" value="Genomic_DNA"/>
</dbReference>
<dbReference type="RefSeq" id="WP_011239210.1">
    <property type="nucleotide sequence ID" value="NC_006513.1"/>
</dbReference>
<dbReference type="SMR" id="Q5NZG4"/>
<dbReference type="STRING" id="76114.ebA5999"/>
<dbReference type="KEGG" id="eba:ebA5999"/>
<dbReference type="eggNOG" id="COG0764">
    <property type="taxonomic scope" value="Bacteria"/>
</dbReference>
<dbReference type="HOGENOM" id="CLU_078912_1_0_4"/>
<dbReference type="OrthoDB" id="9772788at2"/>
<dbReference type="Proteomes" id="UP000006552">
    <property type="component" value="Chromosome"/>
</dbReference>
<dbReference type="GO" id="GO:0005737">
    <property type="term" value="C:cytoplasm"/>
    <property type="evidence" value="ECO:0007669"/>
    <property type="project" value="UniProtKB-SubCell"/>
</dbReference>
<dbReference type="GO" id="GO:0016020">
    <property type="term" value="C:membrane"/>
    <property type="evidence" value="ECO:0007669"/>
    <property type="project" value="GOC"/>
</dbReference>
<dbReference type="GO" id="GO:0019171">
    <property type="term" value="F:(3R)-hydroxyacyl-[acyl-carrier-protein] dehydratase activity"/>
    <property type="evidence" value="ECO:0007669"/>
    <property type="project" value="UniProtKB-EC"/>
</dbReference>
<dbReference type="GO" id="GO:0006633">
    <property type="term" value="P:fatty acid biosynthetic process"/>
    <property type="evidence" value="ECO:0007669"/>
    <property type="project" value="UniProtKB-UniRule"/>
</dbReference>
<dbReference type="GO" id="GO:0009245">
    <property type="term" value="P:lipid A biosynthetic process"/>
    <property type="evidence" value="ECO:0007669"/>
    <property type="project" value="UniProtKB-UniRule"/>
</dbReference>
<dbReference type="CDD" id="cd01288">
    <property type="entry name" value="FabZ"/>
    <property type="match status" value="1"/>
</dbReference>
<dbReference type="FunFam" id="3.10.129.10:FF:000001">
    <property type="entry name" value="3-hydroxyacyl-[acyl-carrier-protein] dehydratase FabZ"/>
    <property type="match status" value="1"/>
</dbReference>
<dbReference type="Gene3D" id="3.10.129.10">
    <property type="entry name" value="Hotdog Thioesterase"/>
    <property type="match status" value="1"/>
</dbReference>
<dbReference type="HAMAP" id="MF_00406">
    <property type="entry name" value="FabZ"/>
    <property type="match status" value="1"/>
</dbReference>
<dbReference type="InterPro" id="IPR013114">
    <property type="entry name" value="FabA_FabZ"/>
</dbReference>
<dbReference type="InterPro" id="IPR010084">
    <property type="entry name" value="FabZ"/>
</dbReference>
<dbReference type="InterPro" id="IPR029069">
    <property type="entry name" value="HotDog_dom_sf"/>
</dbReference>
<dbReference type="NCBIfam" id="TIGR01750">
    <property type="entry name" value="fabZ"/>
    <property type="match status" value="1"/>
</dbReference>
<dbReference type="NCBIfam" id="NF000582">
    <property type="entry name" value="PRK00006.1"/>
    <property type="match status" value="1"/>
</dbReference>
<dbReference type="PANTHER" id="PTHR30272">
    <property type="entry name" value="3-HYDROXYACYL-[ACYL-CARRIER-PROTEIN] DEHYDRATASE"/>
    <property type="match status" value="1"/>
</dbReference>
<dbReference type="PANTHER" id="PTHR30272:SF1">
    <property type="entry name" value="3-HYDROXYACYL-[ACYL-CARRIER-PROTEIN] DEHYDRATASE"/>
    <property type="match status" value="1"/>
</dbReference>
<dbReference type="Pfam" id="PF07977">
    <property type="entry name" value="FabA"/>
    <property type="match status" value="1"/>
</dbReference>
<dbReference type="SUPFAM" id="SSF54637">
    <property type="entry name" value="Thioesterase/thiol ester dehydrase-isomerase"/>
    <property type="match status" value="1"/>
</dbReference>
<protein>
    <recommendedName>
        <fullName evidence="1">3-hydroxyacyl-[acyl-carrier-protein] dehydratase FabZ</fullName>
        <ecNumber evidence="1">4.2.1.59</ecNumber>
    </recommendedName>
    <alternativeName>
        <fullName evidence="1">(3R)-hydroxymyristoyl-[acyl-carrier-protein] dehydratase</fullName>
        <shortName evidence="1">(3R)-hydroxymyristoyl-ACP dehydrase</shortName>
    </alternativeName>
    <alternativeName>
        <fullName evidence="1">Beta-hydroxyacyl-ACP dehydratase</fullName>
    </alternativeName>
</protein>
<name>FABZ_AROAE</name>